<accession>Q3K5Y2</accession>
<name>RPOC_PSEPF</name>
<keyword id="KW-0240">DNA-directed RNA polymerase</keyword>
<keyword id="KW-0460">Magnesium</keyword>
<keyword id="KW-0479">Metal-binding</keyword>
<keyword id="KW-0548">Nucleotidyltransferase</keyword>
<keyword id="KW-0804">Transcription</keyword>
<keyword id="KW-0808">Transferase</keyword>
<keyword id="KW-0862">Zinc</keyword>
<comment type="function">
    <text evidence="1">DNA-dependent RNA polymerase catalyzes the transcription of DNA into RNA using the four ribonucleoside triphosphates as substrates.</text>
</comment>
<comment type="catalytic activity">
    <reaction evidence="1">
        <text>RNA(n) + a ribonucleoside 5'-triphosphate = RNA(n+1) + diphosphate</text>
        <dbReference type="Rhea" id="RHEA:21248"/>
        <dbReference type="Rhea" id="RHEA-COMP:14527"/>
        <dbReference type="Rhea" id="RHEA-COMP:17342"/>
        <dbReference type="ChEBI" id="CHEBI:33019"/>
        <dbReference type="ChEBI" id="CHEBI:61557"/>
        <dbReference type="ChEBI" id="CHEBI:140395"/>
        <dbReference type="EC" id="2.7.7.6"/>
    </reaction>
</comment>
<comment type="cofactor">
    <cofactor evidence="1">
        <name>Mg(2+)</name>
        <dbReference type="ChEBI" id="CHEBI:18420"/>
    </cofactor>
    <text evidence="1">Binds 1 Mg(2+) ion per subunit.</text>
</comment>
<comment type="cofactor">
    <cofactor evidence="1">
        <name>Zn(2+)</name>
        <dbReference type="ChEBI" id="CHEBI:29105"/>
    </cofactor>
    <text evidence="1">Binds 2 Zn(2+) ions per subunit.</text>
</comment>
<comment type="subunit">
    <text evidence="1">The RNAP catalytic core consists of 2 alpha, 1 beta, 1 beta' and 1 omega subunit. When a sigma factor is associated with the core the holoenzyme is formed, which can initiate transcription.</text>
</comment>
<comment type="similarity">
    <text evidence="1">Belongs to the RNA polymerase beta' chain family.</text>
</comment>
<proteinExistence type="inferred from homology"/>
<protein>
    <recommendedName>
        <fullName evidence="1">DNA-directed RNA polymerase subunit beta'</fullName>
        <shortName evidence="1">RNAP subunit beta'</shortName>
        <ecNumber evidence="1">2.7.7.6</ecNumber>
    </recommendedName>
    <alternativeName>
        <fullName evidence="1">RNA polymerase subunit beta'</fullName>
    </alternativeName>
    <alternativeName>
        <fullName evidence="1">Transcriptase subunit beta'</fullName>
    </alternativeName>
</protein>
<reference key="1">
    <citation type="journal article" date="2009" name="Genome Biol.">
        <title>Genomic and genetic analyses of diversity and plant interactions of Pseudomonas fluorescens.</title>
        <authorList>
            <person name="Silby M.W."/>
            <person name="Cerdeno-Tarraga A.M."/>
            <person name="Vernikos G.S."/>
            <person name="Giddens S.R."/>
            <person name="Jackson R.W."/>
            <person name="Preston G.M."/>
            <person name="Zhang X.-X."/>
            <person name="Moon C.D."/>
            <person name="Gehrig S.M."/>
            <person name="Godfrey S.A.C."/>
            <person name="Knight C.G."/>
            <person name="Malone J.G."/>
            <person name="Robinson Z."/>
            <person name="Spiers A.J."/>
            <person name="Harris S."/>
            <person name="Challis G.L."/>
            <person name="Yaxley A.M."/>
            <person name="Harris D."/>
            <person name="Seeger K."/>
            <person name="Murphy L."/>
            <person name="Rutter S."/>
            <person name="Squares R."/>
            <person name="Quail M.A."/>
            <person name="Saunders E."/>
            <person name="Mavromatis K."/>
            <person name="Brettin T.S."/>
            <person name="Bentley S.D."/>
            <person name="Hothersall J."/>
            <person name="Stephens E."/>
            <person name="Thomas C.M."/>
            <person name="Parkhill J."/>
            <person name="Levy S.B."/>
            <person name="Rainey P.B."/>
            <person name="Thomson N.R."/>
        </authorList>
    </citation>
    <scope>NUCLEOTIDE SEQUENCE [LARGE SCALE GENOMIC DNA]</scope>
    <source>
        <strain>Pf0-1</strain>
    </source>
</reference>
<feature type="chain" id="PRO_0000225566" description="DNA-directed RNA polymerase subunit beta'">
    <location>
        <begin position="1"/>
        <end position="1399"/>
    </location>
</feature>
<feature type="binding site" evidence="1">
    <location>
        <position position="70"/>
    </location>
    <ligand>
        <name>Zn(2+)</name>
        <dbReference type="ChEBI" id="CHEBI:29105"/>
        <label>1</label>
    </ligand>
</feature>
<feature type="binding site" evidence="1">
    <location>
        <position position="72"/>
    </location>
    <ligand>
        <name>Zn(2+)</name>
        <dbReference type="ChEBI" id="CHEBI:29105"/>
        <label>1</label>
    </ligand>
</feature>
<feature type="binding site" evidence="1">
    <location>
        <position position="85"/>
    </location>
    <ligand>
        <name>Zn(2+)</name>
        <dbReference type="ChEBI" id="CHEBI:29105"/>
        <label>1</label>
    </ligand>
</feature>
<feature type="binding site" evidence="1">
    <location>
        <position position="88"/>
    </location>
    <ligand>
        <name>Zn(2+)</name>
        <dbReference type="ChEBI" id="CHEBI:29105"/>
        <label>1</label>
    </ligand>
</feature>
<feature type="binding site" evidence="1">
    <location>
        <position position="460"/>
    </location>
    <ligand>
        <name>Mg(2+)</name>
        <dbReference type="ChEBI" id="CHEBI:18420"/>
    </ligand>
</feature>
<feature type="binding site" evidence="1">
    <location>
        <position position="462"/>
    </location>
    <ligand>
        <name>Mg(2+)</name>
        <dbReference type="ChEBI" id="CHEBI:18420"/>
    </ligand>
</feature>
<feature type="binding site" evidence="1">
    <location>
        <position position="464"/>
    </location>
    <ligand>
        <name>Mg(2+)</name>
        <dbReference type="ChEBI" id="CHEBI:18420"/>
    </ligand>
</feature>
<feature type="binding site" evidence="1">
    <location>
        <position position="814"/>
    </location>
    <ligand>
        <name>Zn(2+)</name>
        <dbReference type="ChEBI" id="CHEBI:29105"/>
        <label>2</label>
    </ligand>
</feature>
<feature type="binding site" evidence="1">
    <location>
        <position position="888"/>
    </location>
    <ligand>
        <name>Zn(2+)</name>
        <dbReference type="ChEBI" id="CHEBI:29105"/>
        <label>2</label>
    </ligand>
</feature>
<feature type="binding site" evidence="1">
    <location>
        <position position="895"/>
    </location>
    <ligand>
        <name>Zn(2+)</name>
        <dbReference type="ChEBI" id="CHEBI:29105"/>
        <label>2</label>
    </ligand>
</feature>
<feature type="binding site" evidence="1">
    <location>
        <position position="898"/>
    </location>
    <ligand>
        <name>Zn(2+)</name>
        <dbReference type="ChEBI" id="CHEBI:29105"/>
        <label>2</label>
    </ligand>
</feature>
<dbReference type="EC" id="2.7.7.6" evidence="1"/>
<dbReference type="EMBL" id="CP000094">
    <property type="protein sequence ID" value="ABA76822.1"/>
    <property type="molecule type" value="Genomic_DNA"/>
</dbReference>
<dbReference type="RefSeq" id="WP_007957594.1">
    <property type="nucleotide sequence ID" value="NC_007492.2"/>
</dbReference>
<dbReference type="SMR" id="Q3K5Y2"/>
<dbReference type="KEGG" id="pfo:Pfl01_5085"/>
<dbReference type="eggNOG" id="COG0086">
    <property type="taxonomic scope" value="Bacteria"/>
</dbReference>
<dbReference type="HOGENOM" id="CLU_000524_3_1_6"/>
<dbReference type="Proteomes" id="UP000002704">
    <property type="component" value="Chromosome"/>
</dbReference>
<dbReference type="GO" id="GO:0000428">
    <property type="term" value="C:DNA-directed RNA polymerase complex"/>
    <property type="evidence" value="ECO:0007669"/>
    <property type="project" value="UniProtKB-KW"/>
</dbReference>
<dbReference type="GO" id="GO:0003677">
    <property type="term" value="F:DNA binding"/>
    <property type="evidence" value="ECO:0007669"/>
    <property type="project" value="UniProtKB-UniRule"/>
</dbReference>
<dbReference type="GO" id="GO:0003899">
    <property type="term" value="F:DNA-directed RNA polymerase activity"/>
    <property type="evidence" value="ECO:0007669"/>
    <property type="project" value="UniProtKB-UniRule"/>
</dbReference>
<dbReference type="GO" id="GO:0000287">
    <property type="term" value="F:magnesium ion binding"/>
    <property type="evidence" value="ECO:0007669"/>
    <property type="project" value="UniProtKB-UniRule"/>
</dbReference>
<dbReference type="GO" id="GO:0008270">
    <property type="term" value="F:zinc ion binding"/>
    <property type="evidence" value="ECO:0007669"/>
    <property type="project" value="UniProtKB-UniRule"/>
</dbReference>
<dbReference type="GO" id="GO:0006351">
    <property type="term" value="P:DNA-templated transcription"/>
    <property type="evidence" value="ECO:0007669"/>
    <property type="project" value="UniProtKB-UniRule"/>
</dbReference>
<dbReference type="CDD" id="cd02655">
    <property type="entry name" value="RNAP_beta'_C"/>
    <property type="match status" value="1"/>
</dbReference>
<dbReference type="CDD" id="cd01609">
    <property type="entry name" value="RNAP_beta'_N"/>
    <property type="match status" value="1"/>
</dbReference>
<dbReference type="FunFam" id="1.10.132.30:FF:000003">
    <property type="entry name" value="DNA-directed RNA polymerase subunit beta"/>
    <property type="match status" value="1"/>
</dbReference>
<dbReference type="FunFam" id="1.10.150.390:FF:000002">
    <property type="entry name" value="DNA-directed RNA polymerase subunit beta"/>
    <property type="match status" value="1"/>
</dbReference>
<dbReference type="FunFam" id="1.10.40.90:FF:000001">
    <property type="entry name" value="DNA-directed RNA polymerase subunit beta"/>
    <property type="match status" value="1"/>
</dbReference>
<dbReference type="FunFam" id="4.10.860.120:FF:000001">
    <property type="entry name" value="DNA-directed RNA polymerase subunit beta"/>
    <property type="match status" value="1"/>
</dbReference>
<dbReference type="Gene3D" id="1.10.132.30">
    <property type="match status" value="1"/>
</dbReference>
<dbReference type="Gene3D" id="1.10.150.390">
    <property type="match status" value="1"/>
</dbReference>
<dbReference type="Gene3D" id="1.10.1790.20">
    <property type="match status" value="1"/>
</dbReference>
<dbReference type="Gene3D" id="1.10.40.90">
    <property type="match status" value="1"/>
</dbReference>
<dbReference type="Gene3D" id="2.40.40.20">
    <property type="match status" value="1"/>
</dbReference>
<dbReference type="Gene3D" id="2.40.50.100">
    <property type="match status" value="3"/>
</dbReference>
<dbReference type="Gene3D" id="4.10.860.120">
    <property type="entry name" value="RNA polymerase II, clamp domain"/>
    <property type="match status" value="1"/>
</dbReference>
<dbReference type="Gene3D" id="1.10.274.100">
    <property type="entry name" value="RNA polymerase Rpb1, domain 3"/>
    <property type="match status" value="1"/>
</dbReference>
<dbReference type="HAMAP" id="MF_01322">
    <property type="entry name" value="RNApol_bact_RpoC"/>
    <property type="match status" value="1"/>
</dbReference>
<dbReference type="InterPro" id="IPR045867">
    <property type="entry name" value="DNA-dir_RpoC_beta_prime"/>
</dbReference>
<dbReference type="InterPro" id="IPR012754">
    <property type="entry name" value="DNA-dir_RpoC_beta_prime_bact"/>
</dbReference>
<dbReference type="InterPro" id="IPR000722">
    <property type="entry name" value="RNA_pol_asu"/>
</dbReference>
<dbReference type="InterPro" id="IPR006592">
    <property type="entry name" value="RNA_pol_N"/>
</dbReference>
<dbReference type="InterPro" id="IPR007080">
    <property type="entry name" value="RNA_pol_Rpb1_1"/>
</dbReference>
<dbReference type="InterPro" id="IPR007066">
    <property type="entry name" value="RNA_pol_Rpb1_3"/>
</dbReference>
<dbReference type="InterPro" id="IPR042102">
    <property type="entry name" value="RNA_pol_Rpb1_3_sf"/>
</dbReference>
<dbReference type="InterPro" id="IPR007083">
    <property type="entry name" value="RNA_pol_Rpb1_4"/>
</dbReference>
<dbReference type="InterPro" id="IPR007081">
    <property type="entry name" value="RNA_pol_Rpb1_5"/>
</dbReference>
<dbReference type="InterPro" id="IPR044893">
    <property type="entry name" value="RNA_pol_Rpb1_clamp_domain"/>
</dbReference>
<dbReference type="InterPro" id="IPR038120">
    <property type="entry name" value="Rpb1_funnel_sf"/>
</dbReference>
<dbReference type="NCBIfam" id="TIGR02386">
    <property type="entry name" value="rpoC_TIGR"/>
    <property type="match status" value="1"/>
</dbReference>
<dbReference type="PANTHER" id="PTHR19376">
    <property type="entry name" value="DNA-DIRECTED RNA POLYMERASE"/>
    <property type="match status" value="1"/>
</dbReference>
<dbReference type="PANTHER" id="PTHR19376:SF54">
    <property type="entry name" value="DNA-DIRECTED RNA POLYMERASE SUBUNIT BETA"/>
    <property type="match status" value="1"/>
</dbReference>
<dbReference type="Pfam" id="PF04997">
    <property type="entry name" value="RNA_pol_Rpb1_1"/>
    <property type="match status" value="1"/>
</dbReference>
<dbReference type="Pfam" id="PF00623">
    <property type="entry name" value="RNA_pol_Rpb1_2"/>
    <property type="match status" value="2"/>
</dbReference>
<dbReference type="Pfam" id="PF04983">
    <property type="entry name" value="RNA_pol_Rpb1_3"/>
    <property type="match status" value="1"/>
</dbReference>
<dbReference type="Pfam" id="PF05000">
    <property type="entry name" value="RNA_pol_Rpb1_4"/>
    <property type="match status" value="1"/>
</dbReference>
<dbReference type="Pfam" id="PF04998">
    <property type="entry name" value="RNA_pol_Rpb1_5"/>
    <property type="match status" value="1"/>
</dbReference>
<dbReference type="SMART" id="SM00663">
    <property type="entry name" value="RPOLA_N"/>
    <property type="match status" value="1"/>
</dbReference>
<dbReference type="SUPFAM" id="SSF64484">
    <property type="entry name" value="beta and beta-prime subunits of DNA dependent RNA-polymerase"/>
    <property type="match status" value="1"/>
</dbReference>
<gene>
    <name evidence="1" type="primary">rpoC</name>
    <name type="ordered locus">Pfl01_5085</name>
</gene>
<evidence type="ECO:0000255" key="1">
    <source>
        <dbReference type="HAMAP-Rule" id="MF_01322"/>
    </source>
</evidence>
<organism>
    <name type="scientific">Pseudomonas fluorescens (strain Pf0-1)</name>
    <dbReference type="NCBI Taxonomy" id="205922"/>
    <lineage>
        <taxon>Bacteria</taxon>
        <taxon>Pseudomonadati</taxon>
        <taxon>Pseudomonadota</taxon>
        <taxon>Gammaproteobacteria</taxon>
        <taxon>Pseudomonadales</taxon>
        <taxon>Pseudomonadaceae</taxon>
        <taxon>Pseudomonas</taxon>
    </lineage>
</organism>
<sequence>MKDLLNLLKNQGQVEEFDAIRIGLASPEMIRSWSFGEVKKPETINYRTFKPERDGLFCAKIFGPVKDYECLCGKYKRLKHRGVICEKCGVEVALAKVRRERMAHIELASPVAHIWFLKSLPSRIGLLMDMTLRDIERVLYFESYVVIDPGMTTLEKGQLLNDEQYFEALEEFGDDFDARMGAEAVRELLHAIDLEHEIGRLREEIPQTNSETKIKKLSKRLKLMEAFQGSGNLPEWMVLTVLPVLPPDLRPLVPLDGGRFATSDLNDLYRRVINRNNRLKRLLDLSAPDIIVRNEKRMLQEAVDALLDNGRRGRAITGSNKRPLKSLADMIKGKQGRFRQNLLGKRVDYSGRSVITVGPTLRLHQCGLPKKMALELFKPFIFGKLEMRGLATTIKAAKKMVERELPEVWDVLAEVIREHPVLLNRAPTLHRLGIQAFEPVLIEGKAIQLHPLVCAAYNADFDGDQMAVHVPLTLEAQLEARALMMSTNNILSPANGEPIIVPSQDVVLGLYYMTREAINAKGEGRVFADLQEVDRVFRAGEAALHAKIKVRINETVNDRDGNSVNNTRIVDTTVGRALLFQVVPKGLSFDVVNLPMKKKAISKLINQCYRVVGLKETVIFADQLMYTGFAYSTISGVSIGVNDFVIPDEKARIIGAATDEVKEIESQYASGLVTQGEKYNKVIDLWSKANDEVSKAMMANLSKEKVIDRHGDEVEQESFNSMYMMADSGARGSAAQIRQLAGMRGLMAKPDGSIIETPITANFREGLSVLQYFISTHGARKGLADTALKTANSGYLTRRLVDVAQDLVVTEIDCGTEHGLLMTPHIEGGDVVEPLGERVLGRVIARDVFKPGTEDVIVPAGTLVDEKWVEFIELNSIDEVIVRSPISCETRYGICAKCYGRDLARGHQVNIGEAVGVIAAQSIGEPGTQLTMRTFHIGGAASRTSAADSVQVKNGGTVRLHNLKHVERVDGNLVAVSRSGELAIADDFGRERERYKLPYGAVISVKEGDKVDAGAIVAKWDPHTHPIVTEMKGTVTYVGMEEGITIKRQTDELTGMTNIEVLDAKDRPAAGKDIRPAVKMVDDNGKDLLLPGTDVIAQYFLPANALVGVADGAKIAIGDVIARIPQETSKTRDITGGLPRVADLFEARRPKEASILAEVSGTIAFGKETKGKRRLVITPNDGSDPYEELIPKWRHLNVFEGEQVNRGEVISDGPSDPHDILRLLGVSALAKYIVNEIQDVYRLQGVKINDKHIETILRQMLRKVEISESGDSSFIKGDQMELTHVLVENERLNAEDKFVSKFTRVLLGITKASLSTESFISAASFQETTRVLTEAAVTGKRDYLRGLKENVVVGRLIPAGTGLAYHSERKRRRDADKPLRVSASEVEAALTEALNSSGN</sequence>